<keyword id="KW-0963">Cytoplasm</keyword>
<keyword id="KW-0269">Exonuclease</keyword>
<keyword id="KW-0378">Hydrolase</keyword>
<keyword id="KW-0540">Nuclease</keyword>
<proteinExistence type="inferred from homology"/>
<feature type="chain" id="PRO_0000197878" description="Exodeoxyribonuclease 7 large subunit">
    <location>
        <begin position="1"/>
        <end position="445"/>
    </location>
</feature>
<evidence type="ECO:0000255" key="1">
    <source>
        <dbReference type="HAMAP-Rule" id="MF_00378"/>
    </source>
</evidence>
<organism>
    <name type="scientific">Staphylococcus aureus (strain Mu50 / ATCC 700699)</name>
    <dbReference type="NCBI Taxonomy" id="158878"/>
    <lineage>
        <taxon>Bacteria</taxon>
        <taxon>Bacillati</taxon>
        <taxon>Bacillota</taxon>
        <taxon>Bacilli</taxon>
        <taxon>Bacillales</taxon>
        <taxon>Staphylococcaceae</taxon>
        <taxon>Staphylococcus</taxon>
    </lineage>
</organism>
<protein>
    <recommendedName>
        <fullName evidence="1">Exodeoxyribonuclease 7 large subunit</fullName>
        <ecNumber evidence="1">3.1.11.6</ecNumber>
    </recommendedName>
    <alternativeName>
        <fullName evidence="1">Exodeoxyribonuclease VII large subunit</fullName>
        <shortName evidence="1">Exonuclease VII large subunit</shortName>
    </alternativeName>
</protein>
<sequence length="445" mass="50894">MSDYLSVSALTKYIKYKFDQDPHLQSVLIKGELSNFKKHSSGHLYFNVKDKESVISAMMFKGSASKLNFEPKEGDEVLLEARVSVFERRGNYQIYVNKMQLDGIGNLYQKLEALKKKLTEEGCFDKANKKSIPKFPKKIAVLTASTGAAIRDIHSTINSRFPLAEQIQISTLVQGEKAKDDIIEKIEYADSLGVDTIIVGRGGGSIEDLWNFNEEAVVRAIYNCKTPIISAVGHETDFTLSDFAADIRAATPTQAAVIATPDQYELLQQIQQYQFTLTRFIKKHLEQQRKHVEHLSSYYKFKQPTLLYDQQIQRRDDLEKRLKQQIQATFEQQRHRLMLLQQRYNLKALLSSVNQEQQNNLQLTNQLVKLLNSKILSYKNDLKNKVENLNNLSPTNTMLRGYAIVNKKDEVITSTKDLTENDQLTLTMKDGLVDAKVTKVRCNND</sequence>
<reference key="1">
    <citation type="journal article" date="2001" name="Lancet">
        <title>Whole genome sequencing of meticillin-resistant Staphylococcus aureus.</title>
        <authorList>
            <person name="Kuroda M."/>
            <person name="Ohta T."/>
            <person name="Uchiyama I."/>
            <person name="Baba T."/>
            <person name="Yuzawa H."/>
            <person name="Kobayashi I."/>
            <person name="Cui L."/>
            <person name="Oguchi A."/>
            <person name="Aoki K."/>
            <person name="Nagai Y."/>
            <person name="Lian J.-Q."/>
            <person name="Ito T."/>
            <person name="Kanamori M."/>
            <person name="Matsumaru H."/>
            <person name="Maruyama A."/>
            <person name="Murakami H."/>
            <person name="Hosoyama A."/>
            <person name="Mizutani-Ui Y."/>
            <person name="Takahashi N.K."/>
            <person name="Sawano T."/>
            <person name="Inoue R."/>
            <person name="Kaito C."/>
            <person name="Sekimizu K."/>
            <person name="Hirakawa H."/>
            <person name="Kuhara S."/>
            <person name="Goto S."/>
            <person name="Yabuzaki J."/>
            <person name="Kanehisa M."/>
            <person name="Yamashita A."/>
            <person name="Oshima K."/>
            <person name="Furuya K."/>
            <person name="Yoshino C."/>
            <person name="Shiba T."/>
            <person name="Hattori M."/>
            <person name="Ogasawara N."/>
            <person name="Hayashi H."/>
            <person name="Hiramatsu K."/>
        </authorList>
    </citation>
    <scope>NUCLEOTIDE SEQUENCE [LARGE SCALE GENOMIC DNA]</scope>
    <source>
        <strain>Mu50 / ATCC 700699</strain>
    </source>
</reference>
<name>EX7L_STAAM</name>
<accession>P67449</accession>
<accession>Q99TX0</accession>
<dbReference type="EC" id="3.1.11.6" evidence="1"/>
<dbReference type="EMBL" id="BA000017">
    <property type="protein sequence ID" value="BAB57685.1"/>
    <property type="molecule type" value="Genomic_DNA"/>
</dbReference>
<dbReference type="RefSeq" id="WP_001286928.1">
    <property type="nucleotide sequence ID" value="NC_002758.2"/>
</dbReference>
<dbReference type="SMR" id="P67449"/>
<dbReference type="KEGG" id="sav:SAV1523"/>
<dbReference type="HOGENOM" id="CLU_023625_3_1_9"/>
<dbReference type="PhylomeDB" id="P67449"/>
<dbReference type="Proteomes" id="UP000002481">
    <property type="component" value="Chromosome"/>
</dbReference>
<dbReference type="GO" id="GO:0005737">
    <property type="term" value="C:cytoplasm"/>
    <property type="evidence" value="ECO:0007669"/>
    <property type="project" value="UniProtKB-SubCell"/>
</dbReference>
<dbReference type="GO" id="GO:0009318">
    <property type="term" value="C:exodeoxyribonuclease VII complex"/>
    <property type="evidence" value="ECO:0007669"/>
    <property type="project" value="InterPro"/>
</dbReference>
<dbReference type="GO" id="GO:0008855">
    <property type="term" value="F:exodeoxyribonuclease VII activity"/>
    <property type="evidence" value="ECO:0007669"/>
    <property type="project" value="UniProtKB-UniRule"/>
</dbReference>
<dbReference type="GO" id="GO:0003676">
    <property type="term" value="F:nucleic acid binding"/>
    <property type="evidence" value="ECO:0007669"/>
    <property type="project" value="InterPro"/>
</dbReference>
<dbReference type="GO" id="GO:0006308">
    <property type="term" value="P:DNA catabolic process"/>
    <property type="evidence" value="ECO:0007669"/>
    <property type="project" value="UniProtKB-UniRule"/>
</dbReference>
<dbReference type="CDD" id="cd04489">
    <property type="entry name" value="ExoVII_LU_OBF"/>
    <property type="match status" value="1"/>
</dbReference>
<dbReference type="HAMAP" id="MF_00378">
    <property type="entry name" value="Exonuc_7_L"/>
    <property type="match status" value="1"/>
</dbReference>
<dbReference type="InterPro" id="IPR003753">
    <property type="entry name" value="Exonuc_VII_L"/>
</dbReference>
<dbReference type="InterPro" id="IPR020579">
    <property type="entry name" value="Exonuc_VII_lsu_C"/>
</dbReference>
<dbReference type="InterPro" id="IPR025824">
    <property type="entry name" value="OB-fold_nuc-bd_dom"/>
</dbReference>
<dbReference type="NCBIfam" id="TIGR00237">
    <property type="entry name" value="xseA"/>
    <property type="match status" value="1"/>
</dbReference>
<dbReference type="PANTHER" id="PTHR30008">
    <property type="entry name" value="EXODEOXYRIBONUCLEASE 7 LARGE SUBUNIT"/>
    <property type="match status" value="1"/>
</dbReference>
<dbReference type="PANTHER" id="PTHR30008:SF0">
    <property type="entry name" value="EXODEOXYRIBONUCLEASE 7 LARGE SUBUNIT"/>
    <property type="match status" value="1"/>
</dbReference>
<dbReference type="Pfam" id="PF02601">
    <property type="entry name" value="Exonuc_VII_L"/>
    <property type="match status" value="1"/>
</dbReference>
<dbReference type="Pfam" id="PF13742">
    <property type="entry name" value="tRNA_anti_2"/>
    <property type="match status" value="1"/>
</dbReference>
<gene>
    <name evidence="1" type="primary">xseA</name>
    <name type="ordered locus">SAV1523</name>
</gene>
<comment type="function">
    <text evidence="1">Bidirectionally degrades single-stranded DNA into large acid-insoluble oligonucleotides, which are then degraded further into small acid-soluble oligonucleotides.</text>
</comment>
<comment type="catalytic activity">
    <reaction evidence="1">
        <text>Exonucleolytic cleavage in either 5'- to 3'- or 3'- to 5'-direction to yield nucleoside 5'-phosphates.</text>
        <dbReference type="EC" id="3.1.11.6"/>
    </reaction>
</comment>
<comment type="subunit">
    <text evidence="1">Heterooligomer composed of large and small subunits.</text>
</comment>
<comment type="subcellular location">
    <subcellularLocation>
        <location evidence="1">Cytoplasm</location>
    </subcellularLocation>
</comment>
<comment type="similarity">
    <text evidence="1">Belongs to the XseA family.</text>
</comment>